<evidence type="ECO:0000255" key="1">
    <source>
        <dbReference type="HAMAP-Rule" id="MF_01310"/>
    </source>
</evidence>
<evidence type="ECO:0000305" key="2"/>
<gene>
    <name evidence="1" type="primary">rpsK</name>
    <name type="ordered locus">CKL_0250</name>
</gene>
<reference key="1">
    <citation type="journal article" date="2008" name="Proc. Natl. Acad. Sci. U.S.A.">
        <title>The genome of Clostridium kluyveri, a strict anaerobe with unique metabolic features.</title>
        <authorList>
            <person name="Seedorf H."/>
            <person name="Fricke W.F."/>
            <person name="Veith B."/>
            <person name="Brueggemann H."/>
            <person name="Liesegang H."/>
            <person name="Strittmatter A."/>
            <person name="Miethke M."/>
            <person name="Buckel W."/>
            <person name="Hinderberger J."/>
            <person name="Li F."/>
            <person name="Hagemeier C."/>
            <person name="Thauer R.K."/>
            <person name="Gottschalk G."/>
        </authorList>
    </citation>
    <scope>NUCLEOTIDE SEQUENCE [LARGE SCALE GENOMIC DNA]</scope>
    <source>
        <strain>ATCC 8527 / DSM 555 / NBRC 12016 / NCIMB 10680 / K1</strain>
    </source>
</reference>
<name>RS11_CLOK5</name>
<organism>
    <name type="scientific">Clostridium kluyveri (strain ATCC 8527 / DSM 555 / NBRC 12016 / NCIMB 10680 / K1)</name>
    <dbReference type="NCBI Taxonomy" id="431943"/>
    <lineage>
        <taxon>Bacteria</taxon>
        <taxon>Bacillati</taxon>
        <taxon>Bacillota</taxon>
        <taxon>Clostridia</taxon>
        <taxon>Eubacteriales</taxon>
        <taxon>Clostridiaceae</taxon>
        <taxon>Clostridium</taxon>
    </lineage>
</organism>
<comment type="function">
    <text evidence="1">Located on the platform of the 30S subunit, it bridges several disparate RNA helices of the 16S rRNA. Forms part of the Shine-Dalgarno cleft in the 70S ribosome.</text>
</comment>
<comment type="subunit">
    <text evidence="1">Part of the 30S ribosomal subunit. Interacts with proteins S7 and S18. Binds to IF-3.</text>
</comment>
<comment type="similarity">
    <text evidence="1">Belongs to the universal ribosomal protein uS11 family.</text>
</comment>
<accession>A5N4S3</accession>
<sequence>MAAGRVKRTTRRKKERKNVEHGCAHIRSTFNNSIVTITDAAGNTLSWASAGGLGFRGSRKSTPFAAQMAAETSAKAAMEHGLKSIEVYVKGPGSGREAAIRSLQAAGLEVTLIKDVTPIPHNGCRPPKRRRV</sequence>
<proteinExistence type="inferred from homology"/>
<keyword id="KW-1185">Reference proteome</keyword>
<keyword id="KW-0687">Ribonucleoprotein</keyword>
<keyword id="KW-0689">Ribosomal protein</keyword>
<keyword id="KW-0694">RNA-binding</keyword>
<keyword id="KW-0699">rRNA-binding</keyword>
<dbReference type="EMBL" id="CP000673">
    <property type="protein sequence ID" value="EDK32304.1"/>
    <property type="molecule type" value="Genomic_DNA"/>
</dbReference>
<dbReference type="RefSeq" id="WP_011988829.1">
    <property type="nucleotide sequence ID" value="NC_009706.1"/>
</dbReference>
<dbReference type="SMR" id="A5N4S3"/>
<dbReference type="STRING" id="431943.CKL_0250"/>
<dbReference type="KEGG" id="ckl:CKL_0250"/>
<dbReference type="eggNOG" id="COG0100">
    <property type="taxonomic scope" value="Bacteria"/>
</dbReference>
<dbReference type="HOGENOM" id="CLU_072439_5_0_9"/>
<dbReference type="Proteomes" id="UP000002411">
    <property type="component" value="Chromosome"/>
</dbReference>
<dbReference type="GO" id="GO:1990904">
    <property type="term" value="C:ribonucleoprotein complex"/>
    <property type="evidence" value="ECO:0007669"/>
    <property type="project" value="UniProtKB-KW"/>
</dbReference>
<dbReference type="GO" id="GO:0005840">
    <property type="term" value="C:ribosome"/>
    <property type="evidence" value="ECO:0007669"/>
    <property type="project" value="UniProtKB-KW"/>
</dbReference>
<dbReference type="GO" id="GO:0019843">
    <property type="term" value="F:rRNA binding"/>
    <property type="evidence" value="ECO:0007669"/>
    <property type="project" value="UniProtKB-UniRule"/>
</dbReference>
<dbReference type="GO" id="GO:0003735">
    <property type="term" value="F:structural constituent of ribosome"/>
    <property type="evidence" value="ECO:0007669"/>
    <property type="project" value="InterPro"/>
</dbReference>
<dbReference type="GO" id="GO:0006412">
    <property type="term" value="P:translation"/>
    <property type="evidence" value="ECO:0007669"/>
    <property type="project" value="UniProtKB-UniRule"/>
</dbReference>
<dbReference type="FunFam" id="3.30.420.80:FF:000001">
    <property type="entry name" value="30S ribosomal protein S11"/>
    <property type="match status" value="1"/>
</dbReference>
<dbReference type="Gene3D" id="3.30.420.80">
    <property type="entry name" value="Ribosomal protein S11"/>
    <property type="match status" value="1"/>
</dbReference>
<dbReference type="HAMAP" id="MF_01310">
    <property type="entry name" value="Ribosomal_uS11"/>
    <property type="match status" value="1"/>
</dbReference>
<dbReference type="InterPro" id="IPR001971">
    <property type="entry name" value="Ribosomal_uS11"/>
</dbReference>
<dbReference type="InterPro" id="IPR019981">
    <property type="entry name" value="Ribosomal_uS11_bac-type"/>
</dbReference>
<dbReference type="InterPro" id="IPR018102">
    <property type="entry name" value="Ribosomal_uS11_CS"/>
</dbReference>
<dbReference type="InterPro" id="IPR036967">
    <property type="entry name" value="Ribosomal_uS11_sf"/>
</dbReference>
<dbReference type="NCBIfam" id="NF003698">
    <property type="entry name" value="PRK05309.1"/>
    <property type="match status" value="1"/>
</dbReference>
<dbReference type="NCBIfam" id="TIGR03632">
    <property type="entry name" value="uS11_bact"/>
    <property type="match status" value="1"/>
</dbReference>
<dbReference type="PANTHER" id="PTHR11759">
    <property type="entry name" value="40S RIBOSOMAL PROTEIN S14/30S RIBOSOMAL PROTEIN S11"/>
    <property type="match status" value="1"/>
</dbReference>
<dbReference type="Pfam" id="PF00411">
    <property type="entry name" value="Ribosomal_S11"/>
    <property type="match status" value="1"/>
</dbReference>
<dbReference type="PIRSF" id="PIRSF002131">
    <property type="entry name" value="Ribosomal_S11"/>
    <property type="match status" value="1"/>
</dbReference>
<dbReference type="SUPFAM" id="SSF53137">
    <property type="entry name" value="Translational machinery components"/>
    <property type="match status" value="1"/>
</dbReference>
<dbReference type="PROSITE" id="PS00054">
    <property type="entry name" value="RIBOSOMAL_S11"/>
    <property type="match status" value="1"/>
</dbReference>
<feature type="chain" id="PRO_1000086184" description="Small ribosomal subunit protein uS11">
    <location>
        <begin position="1"/>
        <end position="132"/>
    </location>
</feature>
<protein>
    <recommendedName>
        <fullName evidence="1">Small ribosomal subunit protein uS11</fullName>
    </recommendedName>
    <alternativeName>
        <fullName evidence="2">30S ribosomal protein S11</fullName>
    </alternativeName>
</protein>